<evidence type="ECO:0000255" key="1">
    <source>
        <dbReference type="HAMAP-Rule" id="MF_01007"/>
    </source>
</evidence>
<proteinExistence type="inferred from homology"/>
<reference key="1">
    <citation type="submission" date="2006-08" db="EMBL/GenBank/DDBJ databases">
        <title>Complete sequence of chromosome 1 of Burkholderia cenocepacia HI2424.</title>
        <authorList>
            <person name="Copeland A."/>
            <person name="Lucas S."/>
            <person name="Lapidus A."/>
            <person name="Barry K."/>
            <person name="Detter J.C."/>
            <person name="Glavina del Rio T."/>
            <person name="Hammon N."/>
            <person name="Israni S."/>
            <person name="Pitluck S."/>
            <person name="Chain P."/>
            <person name="Malfatti S."/>
            <person name="Shin M."/>
            <person name="Vergez L."/>
            <person name="Schmutz J."/>
            <person name="Larimer F."/>
            <person name="Land M."/>
            <person name="Hauser L."/>
            <person name="Kyrpides N."/>
            <person name="Kim E."/>
            <person name="LiPuma J.J."/>
            <person name="Gonzalez C.F."/>
            <person name="Konstantinidis K."/>
            <person name="Tiedje J.M."/>
            <person name="Richardson P."/>
        </authorList>
    </citation>
    <scope>NUCLEOTIDE SEQUENCE [LARGE SCALE GENOMIC DNA]</scope>
    <source>
        <strain>HI2424</strain>
    </source>
</reference>
<protein>
    <recommendedName>
        <fullName evidence="1">Ribosomal RNA small subunit methyltransferase H</fullName>
        <ecNumber evidence="1">2.1.1.199</ecNumber>
    </recommendedName>
    <alternativeName>
        <fullName evidence="1">16S rRNA m(4)C1402 methyltransferase</fullName>
    </alternativeName>
    <alternativeName>
        <fullName evidence="1">rRNA (cytosine-N(4)-)-methyltransferase RsmH</fullName>
    </alternativeName>
</protein>
<gene>
    <name evidence="1" type="primary">rsmH</name>
    <name type="synonym">mraW</name>
    <name type="ordered locus">Bcen2424_0551</name>
</gene>
<sequence length="313" mass="34208">MGNELRHRTVLLDEAVESLVTRPDGVYVDGTFGRGGHSRAVLARLASAGRLIAFDKDPRAIETAQGIEDARFSIVHDSFASMRDALAARGVEKVSGVLLDLGVSSPQVDDPARGFSFRADGPLDMRMDPTRGESAAEWLARASVQELTEVIRDYGEERFAFQIAKALVARRAESDRLGPLDTTGELAQIVGHVVKTREKGKDPATRTFQAIRIHVNQELADLQVVLDAALSLLEQGGRLVVISFHSLEDRIVKRFMQAHASAPAVDRRLPIRAVDLPSPPLKIISRQFPSEAEVAANPRARSAVMRIAERVTP</sequence>
<name>RSMH_BURCH</name>
<feature type="chain" id="PRO_0000386769" description="Ribosomal RNA small subunit methyltransferase H">
    <location>
        <begin position="1"/>
        <end position="313"/>
    </location>
</feature>
<feature type="binding site" evidence="1">
    <location>
        <begin position="35"/>
        <end position="37"/>
    </location>
    <ligand>
        <name>S-adenosyl-L-methionine</name>
        <dbReference type="ChEBI" id="CHEBI:59789"/>
    </ligand>
</feature>
<feature type="binding site" evidence="1">
    <location>
        <position position="55"/>
    </location>
    <ligand>
        <name>S-adenosyl-L-methionine</name>
        <dbReference type="ChEBI" id="CHEBI:59789"/>
    </ligand>
</feature>
<feature type="binding site" evidence="1">
    <location>
        <position position="79"/>
    </location>
    <ligand>
        <name>S-adenosyl-L-methionine</name>
        <dbReference type="ChEBI" id="CHEBI:59789"/>
    </ligand>
</feature>
<feature type="binding site" evidence="1">
    <location>
        <position position="100"/>
    </location>
    <ligand>
        <name>S-adenosyl-L-methionine</name>
        <dbReference type="ChEBI" id="CHEBI:59789"/>
    </ligand>
</feature>
<feature type="binding site" evidence="1">
    <location>
        <position position="107"/>
    </location>
    <ligand>
        <name>S-adenosyl-L-methionine</name>
        <dbReference type="ChEBI" id="CHEBI:59789"/>
    </ligand>
</feature>
<organism>
    <name type="scientific">Burkholderia cenocepacia (strain HI2424)</name>
    <dbReference type="NCBI Taxonomy" id="331272"/>
    <lineage>
        <taxon>Bacteria</taxon>
        <taxon>Pseudomonadati</taxon>
        <taxon>Pseudomonadota</taxon>
        <taxon>Betaproteobacteria</taxon>
        <taxon>Burkholderiales</taxon>
        <taxon>Burkholderiaceae</taxon>
        <taxon>Burkholderia</taxon>
        <taxon>Burkholderia cepacia complex</taxon>
    </lineage>
</organism>
<dbReference type="EC" id="2.1.1.199" evidence="1"/>
<dbReference type="EMBL" id="CP000458">
    <property type="protein sequence ID" value="ABK07305.1"/>
    <property type="molecule type" value="Genomic_DNA"/>
</dbReference>
<dbReference type="RefSeq" id="WP_011694135.1">
    <property type="nucleotide sequence ID" value="NC_008542.1"/>
</dbReference>
<dbReference type="SMR" id="A0K478"/>
<dbReference type="GeneID" id="83047323"/>
<dbReference type="KEGG" id="bch:Bcen2424_0551"/>
<dbReference type="HOGENOM" id="CLU_038422_2_0_4"/>
<dbReference type="GO" id="GO:0005737">
    <property type="term" value="C:cytoplasm"/>
    <property type="evidence" value="ECO:0007669"/>
    <property type="project" value="UniProtKB-SubCell"/>
</dbReference>
<dbReference type="GO" id="GO:0071424">
    <property type="term" value="F:rRNA (cytosine-N4-)-methyltransferase activity"/>
    <property type="evidence" value="ECO:0007669"/>
    <property type="project" value="UniProtKB-UniRule"/>
</dbReference>
<dbReference type="GO" id="GO:0070475">
    <property type="term" value="P:rRNA base methylation"/>
    <property type="evidence" value="ECO:0007669"/>
    <property type="project" value="UniProtKB-UniRule"/>
</dbReference>
<dbReference type="Gene3D" id="1.10.150.170">
    <property type="entry name" value="Putative methyltransferase TM0872, insert domain"/>
    <property type="match status" value="1"/>
</dbReference>
<dbReference type="Gene3D" id="3.40.50.150">
    <property type="entry name" value="Vaccinia Virus protein VP39"/>
    <property type="match status" value="1"/>
</dbReference>
<dbReference type="HAMAP" id="MF_01007">
    <property type="entry name" value="16SrRNA_methyltr_H"/>
    <property type="match status" value="1"/>
</dbReference>
<dbReference type="InterPro" id="IPR002903">
    <property type="entry name" value="RsmH"/>
</dbReference>
<dbReference type="InterPro" id="IPR023397">
    <property type="entry name" value="SAM-dep_MeTrfase_MraW_recog"/>
</dbReference>
<dbReference type="InterPro" id="IPR029063">
    <property type="entry name" value="SAM-dependent_MTases_sf"/>
</dbReference>
<dbReference type="NCBIfam" id="TIGR00006">
    <property type="entry name" value="16S rRNA (cytosine(1402)-N(4))-methyltransferase RsmH"/>
    <property type="match status" value="1"/>
</dbReference>
<dbReference type="PANTHER" id="PTHR11265:SF0">
    <property type="entry name" value="12S RRNA N4-METHYLCYTIDINE METHYLTRANSFERASE"/>
    <property type="match status" value="1"/>
</dbReference>
<dbReference type="PANTHER" id="PTHR11265">
    <property type="entry name" value="S-ADENOSYL-METHYLTRANSFERASE MRAW"/>
    <property type="match status" value="1"/>
</dbReference>
<dbReference type="Pfam" id="PF01795">
    <property type="entry name" value="Methyltransf_5"/>
    <property type="match status" value="1"/>
</dbReference>
<dbReference type="PIRSF" id="PIRSF004486">
    <property type="entry name" value="MraW"/>
    <property type="match status" value="1"/>
</dbReference>
<dbReference type="SUPFAM" id="SSF81799">
    <property type="entry name" value="Putative methyltransferase TM0872, insert domain"/>
    <property type="match status" value="1"/>
</dbReference>
<dbReference type="SUPFAM" id="SSF53335">
    <property type="entry name" value="S-adenosyl-L-methionine-dependent methyltransferases"/>
    <property type="match status" value="1"/>
</dbReference>
<comment type="function">
    <text evidence="1">Specifically methylates the N4 position of cytidine in position 1402 (C1402) of 16S rRNA.</text>
</comment>
<comment type="catalytic activity">
    <reaction evidence="1">
        <text>cytidine(1402) in 16S rRNA + S-adenosyl-L-methionine = N(4)-methylcytidine(1402) in 16S rRNA + S-adenosyl-L-homocysteine + H(+)</text>
        <dbReference type="Rhea" id="RHEA:42928"/>
        <dbReference type="Rhea" id="RHEA-COMP:10286"/>
        <dbReference type="Rhea" id="RHEA-COMP:10287"/>
        <dbReference type="ChEBI" id="CHEBI:15378"/>
        <dbReference type="ChEBI" id="CHEBI:57856"/>
        <dbReference type="ChEBI" id="CHEBI:59789"/>
        <dbReference type="ChEBI" id="CHEBI:74506"/>
        <dbReference type="ChEBI" id="CHEBI:82748"/>
        <dbReference type="EC" id="2.1.1.199"/>
    </reaction>
</comment>
<comment type="subcellular location">
    <subcellularLocation>
        <location evidence="1">Cytoplasm</location>
    </subcellularLocation>
</comment>
<comment type="similarity">
    <text evidence="1">Belongs to the methyltransferase superfamily. RsmH family.</text>
</comment>
<accession>A0K478</accession>
<keyword id="KW-0963">Cytoplasm</keyword>
<keyword id="KW-0489">Methyltransferase</keyword>
<keyword id="KW-0698">rRNA processing</keyword>
<keyword id="KW-0949">S-adenosyl-L-methionine</keyword>
<keyword id="KW-0808">Transferase</keyword>